<keyword id="KW-0150">Chloroplast</keyword>
<keyword id="KW-0934">Plastid</keyword>
<keyword id="KW-0687">Ribonucleoprotein</keyword>
<keyword id="KW-0689">Ribosomal protein</keyword>
<keyword id="KW-0694">RNA-binding</keyword>
<keyword id="KW-0699">rRNA-binding</keyword>
<name>RR19_IPOPU</name>
<geneLocation type="chloroplast"/>
<sequence length="93" mass="10744">MARSLKKNPFVANHLLKKIDKLNRKAEKEIIRTWSRGSTIIPTMIGHTIAIHNGKEHLPIYITDHMVGHKLGEFASTFNFRGHTKSDNKSRRR</sequence>
<accession>A7Y3J1</accession>
<feature type="chain" id="PRO_0000354357" description="Small ribosomal subunit protein uS19c">
    <location>
        <begin position="1"/>
        <end position="93"/>
    </location>
</feature>
<evidence type="ECO:0000255" key="1">
    <source>
        <dbReference type="HAMAP-Rule" id="MF_00531"/>
    </source>
</evidence>
<evidence type="ECO:0000305" key="2"/>
<dbReference type="EMBL" id="EU118126">
    <property type="protein sequence ID" value="ABV02388.1"/>
    <property type="molecule type" value="Genomic_DNA"/>
</dbReference>
<dbReference type="RefSeq" id="YP_001468348.1">
    <property type="nucleotide sequence ID" value="NC_009808.1"/>
</dbReference>
<dbReference type="SMR" id="A7Y3J1"/>
<dbReference type="GeneID" id="5601231"/>
<dbReference type="GO" id="GO:0009507">
    <property type="term" value="C:chloroplast"/>
    <property type="evidence" value="ECO:0007669"/>
    <property type="project" value="UniProtKB-SubCell"/>
</dbReference>
<dbReference type="GO" id="GO:0005763">
    <property type="term" value="C:mitochondrial small ribosomal subunit"/>
    <property type="evidence" value="ECO:0007669"/>
    <property type="project" value="TreeGrafter"/>
</dbReference>
<dbReference type="GO" id="GO:0019843">
    <property type="term" value="F:rRNA binding"/>
    <property type="evidence" value="ECO:0007669"/>
    <property type="project" value="UniProtKB-UniRule"/>
</dbReference>
<dbReference type="GO" id="GO:0003735">
    <property type="term" value="F:structural constituent of ribosome"/>
    <property type="evidence" value="ECO:0007669"/>
    <property type="project" value="InterPro"/>
</dbReference>
<dbReference type="GO" id="GO:0000028">
    <property type="term" value="P:ribosomal small subunit assembly"/>
    <property type="evidence" value="ECO:0007669"/>
    <property type="project" value="TreeGrafter"/>
</dbReference>
<dbReference type="GO" id="GO:0006412">
    <property type="term" value="P:translation"/>
    <property type="evidence" value="ECO:0007669"/>
    <property type="project" value="UniProtKB-UniRule"/>
</dbReference>
<dbReference type="FunFam" id="3.30.860.10:FF:000001">
    <property type="entry name" value="30S ribosomal protein S19"/>
    <property type="match status" value="1"/>
</dbReference>
<dbReference type="Gene3D" id="3.30.860.10">
    <property type="entry name" value="30s Ribosomal Protein S19, Chain A"/>
    <property type="match status" value="1"/>
</dbReference>
<dbReference type="HAMAP" id="MF_00531">
    <property type="entry name" value="Ribosomal_uS19"/>
    <property type="match status" value="1"/>
</dbReference>
<dbReference type="InterPro" id="IPR002222">
    <property type="entry name" value="Ribosomal_uS19"/>
</dbReference>
<dbReference type="InterPro" id="IPR005732">
    <property type="entry name" value="Ribosomal_uS19_bac-type"/>
</dbReference>
<dbReference type="InterPro" id="IPR020934">
    <property type="entry name" value="Ribosomal_uS19_CS"/>
</dbReference>
<dbReference type="InterPro" id="IPR023575">
    <property type="entry name" value="Ribosomal_uS19_SF"/>
</dbReference>
<dbReference type="NCBIfam" id="TIGR01050">
    <property type="entry name" value="rpsS_bact"/>
    <property type="match status" value="1"/>
</dbReference>
<dbReference type="PANTHER" id="PTHR11880">
    <property type="entry name" value="RIBOSOMAL PROTEIN S19P FAMILY MEMBER"/>
    <property type="match status" value="1"/>
</dbReference>
<dbReference type="PANTHER" id="PTHR11880:SF8">
    <property type="entry name" value="SMALL RIBOSOMAL SUBUNIT PROTEIN US19M"/>
    <property type="match status" value="1"/>
</dbReference>
<dbReference type="Pfam" id="PF00203">
    <property type="entry name" value="Ribosomal_S19"/>
    <property type="match status" value="1"/>
</dbReference>
<dbReference type="PIRSF" id="PIRSF002144">
    <property type="entry name" value="Ribosomal_S19"/>
    <property type="match status" value="1"/>
</dbReference>
<dbReference type="PRINTS" id="PR00975">
    <property type="entry name" value="RIBOSOMALS19"/>
</dbReference>
<dbReference type="SUPFAM" id="SSF54570">
    <property type="entry name" value="Ribosomal protein S19"/>
    <property type="match status" value="1"/>
</dbReference>
<dbReference type="PROSITE" id="PS00323">
    <property type="entry name" value="RIBOSOMAL_S19"/>
    <property type="match status" value="1"/>
</dbReference>
<protein>
    <recommendedName>
        <fullName evidence="1">Small ribosomal subunit protein uS19c</fullName>
    </recommendedName>
    <alternativeName>
        <fullName evidence="2">30S ribosomal protein S19, chloroplastic</fullName>
    </alternativeName>
</protein>
<comment type="function">
    <text evidence="1">Protein S19 forms a complex with S13 that binds strongly to the 16S ribosomal RNA.</text>
</comment>
<comment type="subcellular location">
    <subcellularLocation>
        <location>Plastid</location>
        <location>Chloroplast</location>
    </subcellularLocation>
</comment>
<comment type="similarity">
    <text evidence="1">Belongs to the universal ribosomal protein uS19 family.</text>
</comment>
<reference key="1">
    <citation type="journal article" date="2007" name="BMC Plant Biol.">
        <title>Complete plastid genome sequences suggest strong selection for retention of photosynthetic genes in the parasitic plant genus Cuscuta.</title>
        <authorList>
            <person name="McNeal J.R."/>
            <person name="Kuehl J.V."/>
            <person name="Boore J.L."/>
            <person name="dePamphilis C.W."/>
        </authorList>
    </citation>
    <scope>NUCLEOTIDE SEQUENCE [LARGE SCALE GENOMIC DNA]</scope>
</reference>
<gene>
    <name evidence="1" type="primary">rps19</name>
</gene>
<organism>
    <name type="scientific">Ipomoea purpurea</name>
    <name type="common">Common morning glory</name>
    <name type="synonym">Pharbitis purpurea</name>
    <dbReference type="NCBI Taxonomy" id="4121"/>
    <lineage>
        <taxon>Eukaryota</taxon>
        <taxon>Viridiplantae</taxon>
        <taxon>Streptophyta</taxon>
        <taxon>Embryophyta</taxon>
        <taxon>Tracheophyta</taxon>
        <taxon>Spermatophyta</taxon>
        <taxon>Magnoliopsida</taxon>
        <taxon>eudicotyledons</taxon>
        <taxon>Gunneridae</taxon>
        <taxon>Pentapetalae</taxon>
        <taxon>asterids</taxon>
        <taxon>lamiids</taxon>
        <taxon>Solanales</taxon>
        <taxon>Convolvulaceae</taxon>
        <taxon>Ipomoeeae</taxon>
        <taxon>Ipomoea</taxon>
    </lineage>
</organism>
<proteinExistence type="inferred from homology"/>